<gene>
    <name evidence="1" type="primary">rpsK</name>
    <name type="ordered locus">Plav_2759</name>
</gene>
<proteinExistence type="inferred from homology"/>
<name>RS11_PARL1</name>
<dbReference type="EMBL" id="CP000774">
    <property type="protein sequence ID" value="ABS64367.1"/>
    <property type="molecule type" value="Genomic_DNA"/>
</dbReference>
<dbReference type="RefSeq" id="WP_012111681.1">
    <property type="nucleotide sequence ID" value="NC_009719.1"/>
</dbReference>
<dbReference type="SMR" id="A7HWT4"/>
<dbReference type="STRING" id="402881.Plav_2759"/>
<dbReference type="KEGG" id="pla:Plav_2759"/>
<dbReference type="eggNOG" id="COG0100">
    <property type="taxonomic scope" value="Bacteria"/>
</dbReference>
<dbReference type="HOGENOM" id="CLU_072439_5_0_5"/>
<dbReference type="OrthoDB" id="9806415at2"/>
<dbReference type="Proteomes" id="UP000006377">
    <property type="component" value="Chromosome"/>
</dbReference>
<dbReference type="GO" id="GO:1990904">
    <property type="term" value="C:ribonucleoprotein complex"/>
    <property type="evidence" value="ECO:0007669"/>
    <property type="project" value="UniProtKB-KW"/>
</dbReference>
<dbReference type="GO" id="GO:0005840">
    <property type="term" value="C:ribosome"/>
    <property type="evidence" value="ECO:0007669"/>
    <property type="project" value="UniProtKB-KW"/>
</dbReference>
<dbReference type="GO" id="GO:0019843">
    <property type="term" value="F:rRNA binding"/>
    <property type="evidence" value="ECO:0007669"/>
    <property type="project" value="UniProtKB-UniRule"/>
</dbReference>
<dbReference type="GO" id="GO:0003735">
    <property type="term" value="F:structural constituent of ribosome"/>
    <property type="evidence" value="ECO:0007669"/>
    <property type="project" value="InterPro"/>
</dbReference>
<dbReference type="GO" id="GO:0006412">
    <property type="term" value="P:translation"/>
    <property type="evidence" value="ECO:0007669"/>
    <property type="project" value="UniProtKB-UniRule"/>
</dbReference>
<dbReference type="FunFam" id="3.30.420.80:FF:000001">
    <property type="entry name" value="30S ribosomal protein S11"/>
    <property type="match status" value="1"/>
</dbReference>
<dbReference type="Gene3D" id="3.30.420.80">
    <property type="entry name" value="Ribosomal protein S11"/>
    <property type="match status" value="1"/>
</dbReference>
<dbReference type="HAMAP" id="MF_01310">
    <property type="entry name" value="Ribosomal_uS11"/>
    <property type="match status" value="1"/>
</dbReference>
<dbReference type="InterPro" id="IPR001971">
    <property type="entry name" value="Ribosomal_uS11"/>
</dbReference>
<dbReference type="InterPro" id="IPR019981">
    <property type="entry name" value="Ribosomal_uS11_bac-type"/>
</dbReference>
<dbReference type="InterPro" id="IPR018102">
    <property type="entry name" value="Ribosomal_uS11_CS"/>
</dbReference>
<dbReference type="InterPro" id="IPR036967">
    <property type="entry name" value="Ribosomal_uS11_sf"/>
</dbReference>
<dbReference type="NCBIfam" id="NF003698">
    <property type="entry name" value="PRK05309.1"/>
    <property type="match status" value="1"/>
</dbReference>
<dbReference type="NCBIfam" id="TIGR03632">
    <property type="entry name" value="uS11_bact"/>
    <property type="match status" value="1"/>
</dbReference>
<dbReference type="PANTHER" id="PTHR11759">
    <property type="entry name" value="40S RIBOSOMAL PROTEIN S14/30S RIBOSOMAL PROTEIN S11"/>
    <property type="match status" value="1"/>
</dbReference>
<dbReference type="Pfam" id="PF00411">
    <property type="entry name" value="Ribosomal_S11"/>
    <property type="match status" value="1"/>
</dbReference>
<dbReference type="PIRSF" id="PIRSF002131">
    <property type="entry name" value="Ribosomal_S11"/>
    <property type="match status" value="1"/>
</dbReference>
<dbReference type="SUPFAM" id="SSF53137">
    <property type="entry name" value="Translational machinery components"/>
    <property type="match status" value="1"/>
</dbReference>
<dbReference type="PROSITE" id="PS00054">
    <property type="entry name" value="RIBOSOMAL_S11"/>
    <property type="match status" value="1"/>
</dbReference>
<comment type="function">
    <text evidence="1">Located on the platform of the 30S subunit, it bridges several disparate RNA helices of the 16S rRNA. Forms part of the Shine-Dalgarno cleft in the 70S ribosome.</text>
</comment>
<comment type="subunit">
    <text evidence="1">Part of the 30S ribosomal subunit. Interacts with proteins S7 and S18. Binds to IF-3.</text>
</comment>
<comment type="similarity">
    <text evidence="1">Belongs to the universal ribosomal protein uS11 family.</text>
</comment>
<evidence type="ECO:0000255" key="1">
    <source>
        <dbReference type="HAMAP-Rule" id="MF_01310"/>
    </source>
</evidence>
<evidence type="ECO:0000305" key="2"/>
<feature type="chain" id="PRO_1000073204" description="Small ribosomal subunit protein uS11">
    <location>
        <begin position="1"/>
        <end position="129"/>
    </location>
</feature>
<reference key="1">
    <citation type="journal article" date="2011" name="Stand. Genomic Sci.">
        <title>Complete genome sequence of Parvibaculum lavamentivorans type strain (DS-1(T)).</title>
        <authorList>
            <person name="Schleheck D."/>
            <person name="Weiss M."/>
            <person name="Pitluck S."/>
            <person name="Bruce D."/>
            <person name="Land M.L."/>
            <person name="Han S."/>
            <person name="Saunders E."/>
            <person name="Tapia R."/>
            <person name="Detter C."/>
            <person name="Brettin T."/>
            <person name="Han J."/>
            <person name="Woyke T."/>
            <person name="Goodwin L."/>
            <person name="Pennacchio L."/>
            <person name="Nolan M."/>
            <person name="Cook A.M."/>
            <person name="Kjelleberg S."/>
            <person name="Thomas T."/>
        </authorList>
    </citation>
    <scope>NUCLEOTIDE SEQUENCE [LARGE SCALE GENOMIC DNA]</scope>
    <source>
        <strain>DS-1 / DSM 13023 / NCIMB 13966</strain>
    </source>
</reference>
<organism>
    <name type="scientific">Parvibaculum lavamentivorans (strain DS-1 / DSM 13023 / NCIMB 13966)</name>
    <dbReference type="NCBI Taxonomy" id="402881"/>
    <lineage>
        <taxon>Bacteria</taxon>
        <taxon>Pseudomonadati</taxon>
        <taxon>Pseudomonadota</taxon>
        <taxon>Alphaproteobacteria</taxon>
        <taxon>Hyphomicrobiales</taxon>
        <taxon>Parvibaculaceae</taxon>
        <taxon>Parvibaculum</taxon>
    </lineage>
</organism>
<accession>A7HWT4</accession>
<keyword id="KW-1185">Reference proteome</keyword>
<keyword id="KW-0687">Ribonucleoprotein</keyword>
<keyword id="KW-0689">Ribosomal protein</keyword>
<keyword id="KW-0694">RNA-binding</keyword>
<keyword id="KW-0699">rRNA-binding</keyword>
<sequence length="129" mass="13927">MAKEKTRVKRKERKNISSGVAHVNSTFNNTMITIADAQGNAISWSSAGLMGFKGSRKSTPFAAQMAAEDAGKKAMEHGMRTLEVEVCGPGSGRESALRALQSVGFTVTTIRDVTPIPHNGCRPPKRRRV</sequence>
<protein>
    <recommendedName>
        <fullName evidence="1">Small ribosomal subunit protein uS11</fullName>
    </recommendedName>
    <alternativeName>
        <fullName evidence="2">30S ribosomal protein S11</fullName>
    </alternativeName>
</protein>